<protein>
    <recommendedName>
        <fullName evidence="7">Berberine bridge enzyme-like C-1</fullName>
        <shortName evidence="7">NtBBLc</shortName>
        <ecNumber evidence="1">1.1.1.-</ecNumber>
    </recommendedName>
</protein>
<dbReference type="EC" id="1.1.1.-" evidence="1"/>
<dbReference type="EMBL" id="AB604220">
    <property type="protein sequence ID" value="BAK18780.1"/>
    <property type="molecule type" value="mRNA"/>
</dbReference>
<dbReference type="RefSeq" id="NP_001313194.1">
    <property type="nucleotide sequence ID" value="NM_001326265.1"/>
</dbReference>
<dbReference type="SMR" id="F1T161"/>
<dbReference type="STRING" id="4097.A0A1S4DN73"/>
<dbReference type="GlyCosmos" id="F1T161">
    <property type="glycosylation" value="5 sites, No reported glycans"/>
</dbReference>
<dbReference type="PaxDb" id="4097-A0A1S4DN73"/>
<dbReference type="GeneID" id="107831580"/>
<dbReference type="KEGG" id="nta:107831580"/>
<dbReference type="OrthoDB" id="407275at2759"/>
<dbReference type="UniPathway" id="UPA00107"/>
<dbReference type="Proteomes" id="UP000084051">
    <property type="component" value="Unplaced"/>
</dbReference>
<dbReference type="GO" id="GO:0000325">
    <property type="term" value="C:plant-type vacuole"/>
    <property type="evidence" value="ECO:0000314"/>
    <property type="project" value="UniProtKB"/>
</dbReference>
<dbReference type="GO" id="GO:0071949">
    <property type="term" value="F:FAD binding"/>
    <property type="evidence" value="ECO:0007669"/>
    <property type="project" value="InterPro"/>
</dbReference>
<dbReference type="GO" id="GO:0016491">
    <property type="term" value="F:oxidoreductase activity"/>
    <property type="evidence" value="ECO:0007669"/>
    <property type="project" value="UniProtKB-KW"/>
</dbReference>
<dbReference type="GO" id="GO:0009821">
    <property type="term" value="P:alkaloid biosynthetic process"/>
    <property type="evidence" value="ECO:0000315"/>
    <property type="project" value="UniProtKB"/>
</dbReference>
<dbReference type="GO" id="GO:0042179">
    <property type="term" value="P:nicotine biosynthetic process"/>
    <property type="evidence" value="ECO:0000315"/>
    <property type="project" value="UniProtKB"/>
</dbReference>
<dbReference type="GO" id="GO:0009753">
    <property type="term" value="P:response to jasmonic acid"/>
    <property type="evidence" value="ECO:0000270"/>
    <property type="project" value="UniProtKB"/>
</dbReference>
<dbReference type="Gene3D" id="3.30.465.10">
    <property type="match status" value="1"/>
</dbReference>
<dbReference type="Gene3D" id="3.40.462.20">
    <property type="match status" value="1"/>
</dbReference>
<dbReference type="Gene3D" id="3.30.43.10">
    <property type="entry name" value="Uridine Diphospho-n-acetylenolpyruvylglucosamine Reductase, domain 2"/>
    <property type="match status" value="1"/>
</dbReference>
<dbReference type="InterPro" id="IPR012951">
    <property type="entry name" value="BBE"/>
</dbReference>
<dbReference type="InterPro" id="IPR016166">
    <property type="entry name" value="FAD-bd_PCMH"/>
</dbReference>
<dbReference type="InterPro" id="IPR036318">
    <property type="entry name" value="FAD-bd_PCMH-like_sf"/>
</dbReference>
<dbReference type="InterPro" id="IPR016167">
    <property type="entry name" value="FAD-bd_PCMH_sub1"/>
</dbReference>
<dbReference type="InterPro" id="IPR016169">
    <property type="entry name" value="FAD-bd_PCMH_sub2"/>
</dbReference>
<dbReference type="InterPro" id="IPR006094">
    <property type="entry name" value="Oxid_FAD_bind_N"/>
</dbReference>
<dbReference type="PANTHER" id="PTHR32448">
    <property type="entry name" value="OS08G0158400 PROTEIN"/>
    <property type="match status" value="1"/>
</dbReference>
<dbReference type="Pfam" id="PF08031">
    <property type="entry name" value="BBE"/>
    <property type="match status" value="1"/>
</dbReference>
<dbReference type="Pfam" id="PF01565">
    <property type="entry name" value="FAD_binding_4"/>
    <property type="match status" value="1"/>
</dbReference>
<dbReference type="SUPFAM" id="SSF56176">
    <property type="entry name" value="FAD-binding/transporter-associated domain-like"/>
    <property type="match status" value="1"/>
</dbReference>
<dbReference type="PROSITE" id="PS51387">
    <property type="entry name" value="FAD_PCMH"/>
    <property type="match status" value="1"/>
</dbReference>
<gene>
    <name evidence="7" type="primary">BBLC</name>
</gene>
<keyword id="KW-0017">Alkaloid metabolism</keyword>
<keyword id="KW-1015">Disulfide bond</keyword>
<keyword id="KW-0274">FAD</keyword>
<keyword id="KW-0285">Flavoprotein</keyword>
<keyword id="KW-0325">Glycoprotein</keyword>
<keyword id="KW-0560">Oxidoreductase</keyword>
<keyword id="KW-1185">Reference proteome</keyword>
<keyword id="KW-0732">Signal</keyword>
<keyword id="KW-0926">Vacuole</keyword>
<feature type="signal peptide" evidence="3">
    <location>
        <begin position="1"/>
        <end position="19"/>
    </location>
</feature>
<feature type="chain" id="PRO_5003270913" description="Berberine bridge enzyme-like C-1">
    <location>
        <begin position="20"/>
        <end position="562"/>
    </location>
</feature>
<feature type="domain" description="FAD-binding PCMH-type" evidence="5">
    <location>
        <begin position="68"/>
        <end position="244"/>
    </location>
</feature>
<feature type="modified residue" description="Pros-8alpha-FAD histidine" evidence="2">
    <location>
        <position position="105"/>
    </location>
</feature>
<feature type="glycosylation site" description="N-linked (GlcNAc...) asparagine" evidence="4">
    <location>
        <position position="29"/>
    </location>
</feature>
<feature type="glycosylation site" description="N-linked (GlcNAc...) asparagine" evidence="4">
    <location>
        <position position="41"/>
    </location>
</feature>
<feature type="glycosylation site" description="N-linked (GlcNAc...) asparagine" evidence="4">
    <location>
        <position position="359"/>
    </location>
</feature>
<feature type="glycosylation site" description="N-linked (GlcNAc...) asparagine" evidence="4">
    <location>
        <position position="498"/>
    </location>
</feature>
<feature type="glycosylation site" description="N-linked (GlcNAc...) asparagine" evidence="4">
    <location>
        <position position="558"/>
    </location>
</feature>
<feature type="disulfide bond" evidence="1">
    <location>
        <begin position="33"/>
        <end position="90"/>
    </location>
</feature>
<proteinExistence type="evidence at transcript level"/>
<name>BBLC1_TOBAC</name>
<sequence length="562" mass="62112">MFPLIILISFSFTFLSASATSGAGEGVANLSTCLINHNVHNFSMYPTSRNYFNLLDFSLQNLRFAASNMPKPTVIILPNSKEELVSTILCCRQTSYEIRVRCGGHSYEGTSSVSFDGSPFVIIDLMKLDDVSVDLDSETAWAQGGATIGQIYYAIAKASDVHAFSAGSGPTVGSGGHISGGGFGLLSRKFGVAADSVVDALLIDADGRLLDRKAMGEDVFWAIRGGGGGNWGIIYAWKIRLVKVPKIVTTFKISKPGSKQYVAPLLYKWQIVAPNLADDFTLGVQMIPIDLPADMKYGNPTPIEICPQFNGLYLGPKTEAVSILNEAFPELNVKNDDAKEMTWIESALFFSDLDNIFGNSSDDISHLKERYLGVKICFKGKSDYVKTPFSMDGIMTALVEHEKNPNAFLVFDPYGGAMDKISAQAIAFPHRKGNLFAIQYYAQWNEEDDAKSNEHIEWIRGFYNKMAPFVSSSPRGAYVNYLDMDLGMNMDDDYLLRNASSRYSSSVDAVERARAWGEKYFLNNYDRLVKAKTKIDPLNVFRHEQSIPPTLGSTQEHNYSSE</sequence>
<organism>
    <name type="scientific">Nicotiana tabacum</name>
    <name type="common">Common tobacco</name>
    <dbReference type="NCBI Taxonomy" id="4097"/>
    <lineage>
        <taxon>Eukaryota</taxon>
        <taxon>Viridiplantae</taxon>
        <taxon>Streptophyta</taxon>
        <taxon>Embryophyta</taxon>
        <taxon>Tracheophyta</taxon>
        <taxon>Spermatophyta</taxon>
        <taxon>Magnoliopsida</taxon>
        <taxon>eudicotyledons</taxon>
        <taxon>Gunneridae</taxon>
        <taxon>Pentapetalae</taxon>
        <taxon>asterids</taxon>
        <taxon>lamiids</taxon>
        <taxon>Solanales</taxon>
        <taxon>Solanaceae</taxon>
        <taxon>Nicotianoideae</taxon>
        <taxon>Nicotianeae</taxon>
        <taxon>Nicotiana</taxon>
    </lineage>
</organism>
<comment type="function">
    <text evidence="6">Involved in the biosynthesis of pyridine alkaloid natural products, leading mainly to the production of anabasine, anatabine, nicotine and nornicotine, effective deterrents against herbivores with antiparasitic and pesticide properties (neurotoxins); nornicotine serves as the precursor in the synthesis of the carcinogen compound N'-nitrosonornicotine (NNN) (PubMed:21343426). Catalyzes a late oxidation step subsequent to the pyridine ring condensation reaction in the biosynthesis of alkaloids (PubMed:21343426).</text>
</comment>
<comment type="cofactor">
    <cofactor evidence="1">
        <name>FAD</name>
        <dbReference type="ChEBI" id="CHEBI:57692"/>
    </cofactor>
</comment>
<comment type="pathway">
    <text evidence="6">Alkaloid biosynthesis; nicotine biosynthesis.</text>
</comment>
<comment type="subcellular location">
    <subcellularLocation>
        <location evidence="6">Vacuole</location>
    </subcellularLocation>
</comment>
<comment type="tissue specificity">
    <text evidence="6">Mostly expressed in roots.</text>
</comment>
<comment type="induction">
    <text evidence="6">By jasmonic acid (MeJA).</text>
</comment>
<comment type="disruption phenotype">
    <text evidence="6">Strongly reduced nicotine biosynthesis but accumulation of dihydromethanicotine (PubMed:21343426). Inhibition of jasmonate-elicited formation of anatabine and other pyridine alkaloids (PubMed:21343426).</text>
</comment>
<comment type="similarity">
    <text evidence="8">Belongs to the oxygen-dependent FAD-linked oxidoreductase family.</text>
</comment>
<reference key="1">
    <citation type="journal article" date="2011" name="Plant Physiol.">
        <title>Vacuole-localized berberine bridge enzyme-like proteins are required for a late step of nicotine biosynthesis in tobacco.</title>
        <authorList>
            <person name="Kajikawa M."/>
            <person name="Shoji T."/>
            <person name="Kato A."/>
            <person name="Hashimoto T."/>
        </authorList>
    </citation>
    <scope>NUCLEOTIDE SEQUENCE [MRNA]</scope>
    <scope>FUNCTION</scope>
    <scope>DISRUPTION PHENOTYPE</scope>
    <scope>PATHWAY</scope>
    <scope>TISSUE SPECIFICITY</scope>
    <scope>SUBCELLULAR LOCATION</scope>
    <scope>INDUCTION BY JASMONIC ACID</scope>
    <source>
        <strain>cv. Petit Havana SR1</strain>
    </source>
</reference>
<reference key="2">
    <citation type="journal article" date="2014" name="Nat. Commun.">
        <title>The tobacco genome sequence and its comparison with those of tomato and potato.</title>
        <authorList>
            <person name="Sierro N."/>
            <person name="Battey J.N."/>
            <person name="Ouadi S."/>
            <person name="Bakaher N."/>
            <person name="Bovet L."/>
            <person name="Willig A."/>
            <person name="Goepfert S."/>
            <person name="Peitsch M.C."/>
            <person name="Ivanov N.V."/>
        </authorList>
    </citation>
    <scope>NUCLEOTIDE SEQUENCE [LARGE SCALE GENOMIC DNA] OF 168-562</scope>
    <source>
        <strain>cv. TN90</strain>
    </source>
</reference>
<reference key="3">
    <citation type="journal article" date="2013" name="Phytochemistry">
        <title>Molecular genetics of alkaloid biosynthesis in Nicotiana tabacum.</title>
        <authorList>
            <person name="Dewey R.E."/>
            <person name="Xie J."/>
        </authorList>
    </citation>
    <scope>REVIEW ON ALKALOID BIOSYNTHESIS IN NICOTIANA TABACUM</scope>
</reference>
<reference key="4">
    <citation type="journal article" date="2015" name="Mol. Genet. Genomics">
        <title>Current status and prospects for the study of Nicotiana genomics, genetics, and nicotine biosynthesis genes.</title>
        <authorList>
            <person name="Wang X."/>
            <person name="Bennetzen J.L."/>
        </authorList>
    </citation>
    <scope>REVIEW ON NICOTINE BIOSYNTHESIS</scope>
</reference>
<evidence type="ECO:0000250" key="1">
    <source>
        <dbReference type="UniProtKB" id="O64743"/>
    </source>
</evidence>
<evidence type="ECO:0000250" key="2">
    <source>
        <dbReference type="UniProtKB" id="Q9FI21"/>
    </source>
</evidence>
<evidence type="ECO:0000255" key="3"/>
<evidence type="ECO:0000255" key="4">
    <source>
        <dbReference type="PROSITE-ProRule" id="PRU00498"/>
    </source>
</evidence>
<evidence type="ECO:0000255" key="5">
    <source>
        <dbReference type="PROSITE-ProRule" id="PRU00718"/>
    </source>
</evidence>
<evidence type="ECO:0000269" key="6">
    <source>
    </source>
</evidence>
<evidence type="ECO:0000303" key="7">
    <source>
    </source>
</evidence>
<evidence type="ECO:0000305" key="8"/>
<accession>F1T161</accession>
<accession>A0A1S4DN73</accession>